<organism>
    <name type="scientific">Bacillus cytotoxicus (strain DSM 22905 / CIP 110041 / 391-98 / NVH 391-98)</name>
    <dbReference type="NCBI Taxonomy" id="315749"/>
    <lineage>
        <taxon>Bacteria</taxon>
        <taxon>Bacillati</taxon>
        <taxon>Bacillota</taxon>
        <taxon>Bacilli</taxon>
        <taxon>Bacillales</taxon>
        <taxon>Bacillaceae</taxon>
        <taxon>Bacillus</taxon>
        <taxon>Bacillus cereus group</taxon>
    </lineage>
</organism>
<dbReference type="EMBL" id="CP000764">
    <property type="protein sequence ID" value="ABS23361.1"/>
    <property type="molecule type" value="Genomic_DNA"/>
</dbReference>
<dbReference type="RefSeq" id="WP_012095598.1">
    <property type="nucleotide sequence ID" value="NC_009674.1"/>
</dbReference>
<dbReference type="SMR" id="A7GTA3"/>
<dbReference type="STRING" id="315749.Bcer98_3138"/>
<dbReference type="GeneID" id="33898386"/>
<dbReference type="KEGG" id="bcy:Bcer98_3138"/>
<dbReference type="eggNOG" id="COG0632">
    <property type="taxonomic scope" value="Bacteria"/>
</dbReference>
<dbReference type="HOGENOM" id="CLU_087936_1_0_9"/>
<dbReference type="OrthoDB" id="5293449at2"/>
<dbReference type="Proteomes" id="UP000002300">
    <property type="component" value="Chromosome"/>
</dbReference>
<dbReference type="GO" id="GO:0005737">
    <property type="term" value="C:cytoplasm"/>
    <property type="evidence" value="ECO:0007669"/>
    <property type="project" value="UniProtKB-SubCell"/>
</dbReference>
<dbReference type="GO" id="GO:0009379">
    <property type="term" value="C:Holliday junction helicase complex"/>
    <property type="evidence" value="ECO:0007669"/>
    <property type="project" value="InterPro"/>
</dbReference>
<dbReference type="GO" id="GO:0048476">
    <property type="term" value="C:Holliday junction resolvase complex"/>
    <property type="evidence" value="ECO:0007669"/>
    <property type="project" value="UniProtKB-UniRule"/>
</dbReference>
<dbReference type="GO" id="GO:0005524">
    <property type="term" value="F:ATP binding"/>
    <property type="evidence" value="ECO:0007669"/>
    <property type="project" value="InterPro"/>
</dbReference>
<dbReference type="GO" id="GO:0000400">
    <property type="term" value="F:four-way junction DNA binding"/>
    <property type="evidence" value="ECO:0007669"/>
    <property type="project" value="UniProtKB-UniRule"/>
</dbReference>
<dbReference type="GO" id="GO:0009378">
    <property type="term" value="F:four-way junction helicase activity"/>
    <property type="evidence" value="ECO:0007669"/>
    <property type="project" value="InterPro"/>
</dbReference>
<dbReference type="GO" id="GO:0006310">
    <property type="term" value="P:DNA recombination"/>
    <property type="evidence" value="ECO:0007669"/>
    <property type="project" value="UniProtKB-UniRule"/>
</dbReference>
<dbReference type="GO" id="GO:0006281">
    <property type="term" value="P:DNA repair"/>
    <property type="evidence" value="ECO:0007669"/>
    <property type="project" value="UniProtKB-UniRule"/>
</dbReference>
<dbReference type="CDD" id="cd14332">
    <property type="entry name" value="UBA_RuvA_C"/>
    <property type="match status" value="1"/>
</dbReference>
<dbReference type="Gene3D" id="1.10.150.20">
    <property type="entry name" value="5' to 3' exonuclease, C-terminal subdomain"/>
    <property type="match status" value="1"/>
</dbReference>
<dbReference type="Gene3D" id="1.10.8.10">
    <property type="entry name" value="DNA helicase RuvA subunit, C-terminal domain"/>
    <property type="match status" value="1"/>
</dbReference>
<dbReference type="Gene3D" id="2.40.50.140">
    <property type="entry name" value="Nucleic acid-binding proteins"/>
    <property type="match status" value="1"/>
</dbReference>
<dbReference type="HAMAP" id="MF_00031">
    <property type="entry name" value="DNA_HJ_migration_RuvA"/>
    <property type="match status" value="1"/>
</dbReference>
<dbReference type="InterPro" id="IPR013849">
    <property type="entry name" value="DNA_helicase_Holl-junc_RuvA_I"/>
</dbReference>
<dbReference type="InterPro" id="IPR003583">
    <property type="entry name" value="Hlx-hairpin-Hlx_DNA-bd_motif"/>
</dbReference>
<dbReference type="InterPro" id="IPR012340">
    <property type="entry name" value="NA-bd_OB-fold"/>
</dbReference>
<dbReference type="InterPro" id="IPR000085">
    <property type="entry name" value="RuvA"/>
</dbReference>
<dbReference type="InterPro" id="IPR010994">
    <property type="entry name" value="RuvA_2-like"/>
</dbReference>
<dbReference type="InterPro" id="IPR011114">
    <property type="entry name" value="RuvA_C"/>
</dbReference>
<dbReference type="InterPro" id="IPR036267">
    <property type="entry name" value="RuvA_C_sf"/>
</dbReference>
<dbReference type="NCBIfam" id="TIGR00084">
    <property type="entry name" value="ruvA"/>
    <property type="match status" value="1"/>
</dbReference>
<dbReference type="Pfam" id="PF14520">
    <property type="entry name" value="HHH_5"/>
    <property type="match status" value="1"/>
</dbReference>
<dbReference type="Pfam" id="PF07499">
    <property type="entry name" value="RuvA_C"/>
    <property type="match status" value="1"/>
</dbReference>
<dbReference type="Pfam" id="PF01330">
    <property type="entry name" value="RuvA_N"/>
    <property type="match status" value="1"/>
</dbReference>
<dbReference type="SMART" id="SM00278">
    <property type="entry name" value="HhH1"/>
    <property type="match status" value="2"/>
</dbReference>
<dbReference type="SUPFAM" id="SSF46929">
    <property type="entry name" value="DNA helicase RuvA subunit, C-terminal domain"/>
    <property type="match status" value="1"/>
</dbReference>
<dbReference type="SUPFAM" id="SSF50249">
    <property type="entry name" value="Nucleic acid-binding proteins"/>
    <property type="match status" value="1"/>
</dbReference>
<dbReference type="SUPFAM" id="SSF47781">
    <property type="entry name" value="RuvA domain 2-like"/>
    <property type="match status" value="1"/>
</dbReference>
<accession>A7GTA3</accession>
<feature type="chain" id="PRO_1000074409" description="Holliday junction branch migration complex subunit RuvA">
    <location>
        <begin position="1"/>
        <end position="205"/>
    </location>
</feature>
<feature type="region of interest" description="Domain I" evidence="1">
    <location>
        <begin position="1"/>
        <end position="62"/>
    </location>
</feature>
<feature type="region of interest" description="Domain II" evidence="1">
    <location>
        <begin position="63"/>
        <end position="141"/>
    </location>
</feature>
<feature type="region of interest" description="Flexible linker" evidence="1">
    <location>
        <begin position="142"/>
        <end position="152"/>
    </location>
</feature>
<feature type="region of interest" description="Domain III" evidence="1">
    <location>
        <begin position="153"/>
        <end position="205"/>
    </location>
</feature>
<proteinExistence type="inferred from homology"/>
<comment type="function">
    <text evidence="1">The RuvA-RuvB-RuvC complex processes Holliday junction (HJ) DNA during genetic recombination and DNA repair, while the RuvA-RuvB complex plays an important role in the rescue of blocked DNA replication forks via replication fork reversal (RFR). RuvA specifically binds to HJ cruciform DNA, conferring on it an open structure. The RuvB hexamer acts as an ATP-dependent pump, pulling dsDNA into and through the RuvAB complex. HJ branch migration allows RuvC to scan DNA until it finds its consensus sequence, where it cleaves and resolves the cruciform DNA.</text>
</comment>
<comment type="subunit">
    <text evidence="1">Homotetramer. Forms an RuvA(8)-RuvB(12)-Holliday junction (HJ) complex. HJ DNA is sandwiched between 2 RuvA tetramers; dsDNA enters through RuvA and exits via RuvB. An RuvB hexamer assembles on each DNA strand where it exits the tetramer. Each RuvB hexamer is contacted by two RuvA subunits (via domain III) on 2 adjacent RuvB subunits; this complex drives branch migration. In the full resolvosome a probable DNA-RuvA(4)-RuvB(12)-RuvC(2) complex forms which resolves the HJ.</text>
</comment>
<comment type="subcellular location">
    <subcellularLocation>
        <location evidence="1">Cytoplasm</location>
    </subcellularLocation>
</comment>
<comment type="domain">
    <text evidence="1">Has three domains with a flexible linker between the domains II and III and assumes an 'L' shape. Domain III is highly mobile and contacts RuvB.</text>
</comment>
<comment type="similarity">
    <text evidence="1">Belongs to the RuvA family.</text>
</comment>
<evidence type="ECO:0000255" key="1">
    <source>
        <dbReference type="HAMAP-Rule" id="MF_00031"/>
    </source>
</evidence>
<protein>
    <recommendedName>
        <fullName evidence="1">Holliday junction branch migration complex subunit RuvA</fullName>
    </recommendedName>
</protein>
<reference key="1">
    <citation type="journal article" date="2008" name="Chem. Biol. Interact.">
        <title>Extending the Bacillus cereus group genomics to putative food-borne pathogens of different toxicity.</title>
        <authorList>
            <person name="Lapidus A."/>
            <person name="Goltsman E."/>
            <person name="Auger S."/>
            <person name="Galleron N."/>
            <person name="Segurens B."/>
            <person name="Dossat C."/>
            <person name="Land M.L."/>
            <person name="Broussolle V."/>
            <person name="Brillard J."/>
            <person name="Guinebretiere M.-H."/>
            <person name="Sanchis V."/>
            <person name="Nguen-the C."/>
            <person name="Lereclus D."/>
            <person name="Richardson P."/>
            <person name="Wincker P."/>
            <person name="Weissenbach J."/>
            <person name="Ehrlich S.D."/>
            <person name="Sorokin A."/>
        </authorList>
    </citation>
    <scope>NUCLEOTIDE SEQUENCE [LARGE SCALE GENOMIC DNA]</scope>
    <source>
        <strain>DSM 22905 / CIP 110041 / 391-98 / NVH 391-98</strain>
    </source>
</reference>
<keyword id="KW-0963">Cytoplasm</keyword>
<keyword id="KW-0227">DNA damage</keyword>
<keyword id="KW-0233">DNA recombination</keyword>
<keyword id="KW-0234">DNA repair</keyword>
<keyword id="KW-0238">DNA-binding</keyword>
<sequence length="205" mass="23326">MFEYVTGYVEYVGPEYIVLDHNGIGYQIFTPNPYVFQRSKQEIRVYTYHYVREDIMALYGFKTREERLLFTKLLGVSGIGPKGALAILASGQTGQVVQAIENEDERFLVKFPGVGKKTARQMILDLKGKLADVVPDVFVDLFSDEERFDEKKGSSTELDEALEALRALGYAEREINRVLPELLKESLTTDQYIKKALSLLLNGKR</sequence>
<name>RUVA_BACCN</name>
<gene>
    <name evidence="1" type="primary">ruvA</name>
    <name type="ordered locus">Bcer98_3138</name>
</gene>